<protein>
    <recommendedName>
        <fullName>Protein kinase C iota type</fullName>
        <ecNumber>2.7.11.13</ecNumber>
    </recommendedName>
    <alternativeName>
        <fullName>nPKC-iota</fullName>
    </alternativeName>
</protein>
<gene>
    <name type="primary">PRKCI</name>
</gene>
<proteinExistence type="evidence at transcript level"/>
<reference key="1">
    <citation type="submission" date="2004-11" db="EMBL/GenBank/DDBJ databases">
        <authorList>
            <consortium name="The German cDNA consortium"/>
        </authorList>
    </citation>
    <scope>NUCLEOTIDE SEQUENCE [LARGE SCALE MRNA]</scope>
    <source>
        <tissue>Brain cortex</tissue>
    </source>
</reference>
<evidence type="ECO:0000250" key="1"/>
<evidence type="ECO:0000250" key="2">
    <source>
        <dbReference type="UniProtKB" id="F1M7Y5"/>
    </source>
</evidence>
<evidence type="ECO:0000250" key="3">
    <source>
        <dbReference type="UniProtKB" id="P41743"/>
    </source>
</evidence>
<evidence type="ECO:0000250" key="4">
    <source>
        <dbReference type="UniProtKB" id="Q62074"/>
    </source>
</evidence>
<evidence type="ECO:0000255" key="5">
    <source>
        <dbReference type="PROSITE-ProRule" id="PRU00159"/>
    </source>
</evidence>
<evidence type="ECO:0000255" key="6">
    <source>
        <dbReference type="PROSITE-ProRule" id="PRU00226"/>
    </source>
</evidence>
<evidence type="ECO:0000255" key="7">
    <source>
        <dbReference type="PROSITE-ProRule" id="PRU00618"/>
    </source>
</evidence>
<evidence type="ECO:0000255" key="8">
    <source>
        <dbReference type="PROSITE-ProRule" id="PRU01081"/>
    </source>
</evidence>
<evidence type="ECO:0000255" key="9">
    <source>
        <dbReference type="PROSITE-ProRule" id="PRU10027"/>
    </source>
</evidence>
<evidence type="ECO:0000256" key="10">
    <source>
        <dbReference type="SAM" id="MobiDB-lite"/>
    </source>
</evidence>
<evidence type="ECO:0000305" key="11"/>
<keyword id="KW-0007">Acetylation</keyword>
<keyword id="KW-0067">ATP-binding</keyword>
<keyword id="KW-0963">Cytoplasm</keyword>
<keyword id="KW-0967">Endosome</keyword>
<keyword id="KW-0418">Kinase</keyword>
<keyword id="KW-0472">Membrane</keyword>
<keyword id="KW-0479">Metal-binding</keyword>
<keyword id="KW-0547">Nucleotide-binding</keyword>
<keyword id="KW-0539">Nucleus</keyword>
<keyword id="KW-0597">Phosphoprotein</keyword>
<keyword id="KW-0656">Proto-oncogene</keyword>
<keyword id="KW-1185">Reference proteome</keyword>
<keyword id="KW-0723">Serine/threonine-protein kinase</keyword>
<keyword id="KW-0808">Transferase</keyword>
<keyword id="KW-0043">Tumor suppressor</keyword>
<keyword id="KW-0862">Zinc</keyword>
<keyword id="KW-0863">Zinc-finger</keyword>
<accession>Q5R4K9</accession>
<comment type="function">
    <text evidence="2 3">Calcium- and diacylglycerol-independent serine/ threonine-protein kinase that plays a general protective role against apoptotic stimuli, is involved in NF-kappa-B activation, cell survival, differentiation and polarity, and contributes to the regulation of microtubule dynamics in the early secretory pathway. Is necessary for BCR-ABL oncogene-mediated resistance to apoptotic drug in leukemia cells, protecting leukemia cells against drug-induced apoptosis. In cultured neurons, prevents amyloid beta protein-induced apoptosis by interrupting cell death process at a very early step. In glioblastoma cells, may function downstream of phosphatidylinositol 3-kinase (PI(3)K) and PDPK1 in the promotion of cell survival by phosphorylating and inhibiting the pro-apoptotic factor BAD. Can form a protein complex in non-small cell lung cancer (NSCLC) cells with PARD6A and ECT2 and regulate ECT2 oncogenic activity by phosphorylation, which in turn promotes transformed growth and invasion. In response to nerve growth factor (NGF), acts downstream of SRC to phosphorylate and activate IRAK1, allowing the subsequent activation of NF-kappa-B and neuronal cell survival. Functions in the organization of the apical domain in epithelial cells by phosphorylating EZR. This step is crucial for activation and normal distribution of EZR at the early stages of intestinal epithelial cell differentiation. Forms a protein complex with LLGL1 and PARD6B independently of PARD3 to regulate epithelial cell polarity. Plays a role in microtubule dynamics in the early secretory pathway through interaction with RAB2A and GAPDH and recruitment to vesicular tubular clusters (VTCs). In human coronary artery endothelial cells (HCAEC), is activated by saturated fatty acids and mediates lipid-induced apoptosis (By similarity). Involved in early synaptic long term potentiation phase in CA1 hippocampal cells and short term memory formation (By similarity).</text>
</comment>
<comment type="catalytic activity">
    <reaction>
        <text>L-seryl-[protein] + ATP = O-phospho-L-seryl-[protein] + ADP + H(+)</text>
        <dbReference type="Rhea" id="RHEA:17989"/>
        <dbReference type="Rhea" id="RHEA-COMP:9863"/>
        <dbReference type="Rhea" id="RHEA-COMP:11604"/>
        <dbReference type="ChEBI" id="CHEBI:15378"/>
        <dbReference type="ChEBI" id="CHEBI:29999"/>
        <dbReference type="ChEBI" id="CHEBI:30616"/>
        <dbReference type="ChEBI" id="CHEBI:83421"/>
        <dbReference type="ChEBI" id="CHEBI:456216"/>
        <dbReference type="EC" id="2.7.11.13"/>
    </reaction>
</comment>
<comment type="catalytic activity">
    <reaction>
        <text>L-threonyl-[protein] + ATP = O-phospho-L-threonyl-[protein] + ADP + H(+)</text>
        <dbReference type="Rhea" id="RHEA:46608"/>
        <dbReference type="Rhea" id="RHEA-COMP:11060"/>
        <dbReference type="Rhea" id="RHEA-COMP:11605"/>
        <dbReference type="ChEBI" id="CHEBI:15378"/>
        <dbReference type="ChEBI" id="CHEBI:30013"/>
        <dbReference type="ChEBI" id="CHEBI:30616"/>
        <dbReference type="ChEBI" id="CHEBI:61977"/>
        <dbReference type="ChEBI" id="CHEBI:456216"/>
        <dbReference type="EC" id="2.7.11.13"/>
    </reaction>
</comment>
<comment type="activity regulation">
    <text evidence="1">Atypical PKCs (PRKCI and PRKCZ) exhibit an elevated basal enzymatic activity (that may be due to the interaction with SMG1 or SQSTM1) and are not regulated by diacylglycerol, phosphatidylserine, phorbol esters or calcium ions. Two specific sites, Thr-412 (activation loop of the kinase domain) and Thr-564 (turn motif), need to be phosphorylated for its full activation (By similarity). Might also be a target for novel lipid activators that are elevated during nutrient-stimulated insulin secretion.</text>
</comment>
<comment type="subunit">
    <text evidence="3 11">Forms a complex with SQSTM1 and MP2K5 (By similarity). Interacts directly with SQSTM1 (Probable). Interacts with IKBKB. Interacts with PARD6A, PARD6B and PARD6G. Part of a quaternary complex containing aPKC, PARD3, a PARD6 protein (PARD6A, PARD6B or PARD6G) and a GTPase protein (CDC42 or RAC1). Part of a complex with LLGL1 and PARD6B. Interacts with ADAP1/CENTA1. Interaction with SMG1, through the ZN-finger domain, activates the kinase activity. Interacts with CDK7. Forms a complex with RAB2A and GAPDH involved in recruitment onto the membrane of vesicular tubular clusters (VTCs). Interacts with ECT2 ('Thr-359' phosphorylated form). Interacts with VAMP2. Interacts with WDFY2 (via WD repeats 1-3) (By similarity).</text>
</comment>
<comment type="subcellular location">
    <subcellularLocation>
        <location evidence="3">Cytoplasm</location>
    </subcellularLocation>
    <subcellularLocation>
        <location evidence="3">Membrane</location>
    </subcellularLocation>
    <subcellularLocation>
        <location evidence="3">Endosome</location>
    </subcellularLocation>
    <subcellularLocation>
        <location evidence="3">Nucleus</location>
    </subcellularLocation>
    <text evidence="3">Transported into the endosome through interaction with SQSTM1/p62. After phosphorylation by SRC, transported into the nucleus through interaction with KPNB1. Colocalizes with CDK7 in the cytoplasm and nucleus. Transported to vesicular tubular clusters (VTCs) through interaction with RAB2A.</text>
</comment>
<comment type="domain">
    <text evidence="1">The PB1 domain mediates interaction with SQSTM1.</text>
</comment>
<comment type="domain">
    <text evidence="1">The C1 zinc finger does not bind diacylglycerol (DAG).</text>
</comment>
<comment type="domain">
    <text evidence="1">The pseudosubstrate motif resembles the sequence around sites phosphorylated on target proteins, except the presence of a non-phosphorylatable residue in place of Ser, it modulates activity by competing with substrates.</text>
</comment>
<comment type="PTM">
    <text evidence="2 3 4">Phosphorylation at Thr-412 in the activation loop is not mandatory for activation (By similarity). Upon neuronal growth factor (NGF) stimulation, phosphorylated by SRC at Tyr-265, Tyr-280 and Tyr-334 (By similarity). Phosphorylation at Tyr-265 facilitates binding to KPNB1/importin-beta regulating entry of PRKCI into the nucleus (By similarity). Phosphorylation on Tyr-334 is important for NF-kappa-B stimulation (By similarity). Phosphorylated at Thr-564 during the initial phase of long term potentiation (By similarity).</text>
</comment>
<comment type="similarity">
    <text evidence="11">Belongs to the protein kinase superfamily. AGC Ser/Thr protein kinase family. PKC subfamily.</text>
</comment>
<comment type="sequence caution" evidence="11">
    <conflict type="erroneous initiation">
        <sequence resource="EMBL-CDS" id="CAH93307"/>
    </conflict>
    <text>Truncated N-terminus.</text>
</comment>
<organism>
    <name type="scientific">Pongo abelii</name>
    <name type="common">Sumatran orangutan</name>
    <name type="synonym">Pongo pygmaeus abelii</name>
    <dbReference type="NCBI Taxonomy" id="9601"/>
    <lineage>
        <taxon>Eukaryota</taxon>
        <taxon>Metazoa</taxon>
        <taxon>Chordata</taxon>
        <taxon>Craniata</taxon>
        <taxon>Vertebrata</taxon>
        <taxon>Euteleostomi</taxon>
        <taxon>Mammalia</taxon>
        <taxon>Eutheria</taxon>
        <taxon>Euarchontoglires</taxon>
        <taxon>Primates</taxon>
        <taxon>Haplorrhini</taxon>
        <taxon>Catarrhini</taxon>
        <taxon>Hominidae</taxon>
        <taxon>Pongo</taxon>
    </lineage>
</organism>
<name>KPCI_PONAB</name>
<feature type="initiator methionine" description="Removed" evidence="3">
    <location>
        <position position="1"/>
    </location>
</feature>
<feature type="chain" id="PRO_0000055712" description="Protein kinase C iota type">
    <location>
        <begin position="2"/>
        <end position="596"/>
    </location>
</feature>
<feature type="domain" description="PB1" evidence="8">
    <location>
        <begin position="25"/>
        <end position="108"/>
    </location>
</feature>
<feature type="domain" description="Protein kinase" evidence="5">
    <location>
        <begin position="254"/>
        <end position="522"/>
    </location>
</feature>
<feature type="domain" description="AGC-kinase C-terminal" evidence="7">
    <location>
        <begin position="523"/>
        <end position="594"/>
    </location>
</feature>
<feature type="zinc finger region" description="Phorbol-ester/DAG-type" evidence="6">
    <location>
        <begin position="140"/>
        <end position="190"/>
    </location>
</feature>
<feature type="region of interest" description="Disordered" evidence="10">
    <location>
        <begin position="1"/>
        <end position="23"/>
    </location>
</feature>
<feature type="region of interest" description="Regulatory domain" evidence="1">
    <location>
        <begin position="2"/>
        <end position="253"/>
    </location>
</feature>
<feature type="region of interest" description="Required for interaction with RAB2" evidence="1">
    <location>
        <begin position="2"/>
        <end position="28"/>
    </location>
</feature>
<feature type="region of interest" description="Interaction with PARD6A" evidence="1">
    <location>
        <begin position="72"/>
        <end position="91"/>
    </location>
</feature>
<feature type="region of interest" description="Disordered" evidence="10">
    <location>
        <begin position="221"/>
        <end position="246"/>
    </location>
</feature>
<feature type="short sequence motif" description="Pseudosubstrate" evidence="1">
    <location>
        <begin position="125"/>
        <end position="134"/>
    </location>
</feature>
<feature type="compositionally biased region" description="Polar residues" evidence="10">
    <location>
        <begin position="1"/>
        <end position="12"/>
    </location>
</feature>
<feature type="compositionally biased region" description="Basic and acidic residues" evidence="10">
    <location>
        <begin position="225"/>
        <end position="243"/>
    </location>
</feature>
<feature type="active site" description="Proton acceptor" evidence="5 9">
    <location>
        <position position="378"/>
    </location>
</feature>
<feature type="binding site" evidence="5">
    <location>
        <begin position="260"/>
        <end position="268"/>
    </location>
    <ligand>
        <name>ATP</name>
        <dbReference type="ChEBI" id="CHEBI:30616"/>
    </ligand>
</feature>
<feature type="binding site" evidence="5">
    <location>
        <position position="283"/>
    </location>
    <ligand>
        <name>ATP</name>
        <dbReference type="ChEBI" id="CHEBI:30616"/>
    </ligand>
</feature>
<feature type="modified residue" description="N-acetylproline" evidence="3">
    <location>
        <position position="2"/>
    </location>
</feature>
<feature type="modified residue" description="Phosphothreonine" evidence="3">
    <location>
        <position position="3"/>
    </location>
</feature>
<feature type="modified residue" description="Phosphoserine" evidence="3">
    <location>
        <position position="7"/>
    </location>
</feature>
<feature type="modified residue" description="Phosphoserine" evidence="3">
    <location>
        <position position="8"/>
    </location>
</feature>
<feature type="modified residue" description="Phosphothreonine" evidence="3">
    <location>
        <position position="9"/>
    </location>
</feature>
<feature type="modified residue" description="Phosphotyrosine; by SRC" evidence="3">
    <location>
        <position position="265"/>
    </location>
</feature>
<feature type="modified residue" description="Phosphotyrosine; by SRC" evidence="3">
    <location>
        <position position="280"/>
    </location>
</feature>
<feature type="modified residue" description="Phosphotyrosine; by SRC" evidence="3">
    <location>
        <position position="334"/>
    </location>
</feature>
<feature type="modified residue" description="Phosphothreonine; by PDPK1" evidence="3">
    <location>
        <position position="412"/>
    </location>
</feature>
<feature type="modified residue" description="Phosphothreonine" evidence="3">
    <location>
        <position position="564"/>
    </location>
</feature>
<dbReference type="EC" id="2.7.11.13"/>
<dbReference type="EMBL" id="CR861237">
    <property type="protein sequence ID" value="CAH93307.1"/>
    <property type="status" value="ALT_INIT"/>
    <property type="molecule type" value="mRNA"/>
</dbReference>
<dbReference type="RefSeq" id="NP_001126946.1">
    <property type="nucleotide sequence ID" value="NM_001133474.1"/>
</dbReference>
<dbReference type="BMRB" id="Q5R4K9"/>
<dbReference type="SMR" id="Q5R4K9"/>
<dbReference type="FunCoup" id="Q5R4K9">
    <property type="interactions" value="2783"/>
</dbReference>
<dbReference type="STRING" id="9601.ENSPPYP00000015972"/>
<dbReference type="Ensembl" id="ENSPPYT00000016611.3">
    <property type="protein sequence ID" value="ENSPPYP00000015972.3"/>
    <property type="gene ID" value="ENSPPYG00000014289.3"/>
</dbReference>
<dbReference type="GeneID" id="100173964"/>
<dbReference type="KEGG" id="pon:100173964"/>
<dbReference type="CTD" id="5584"/>
<dbReference type="eggNOG" id="KOG0695">
    <property type="taxonomic scope" value="Eukaryota"/>
</dbReference>
<dbReference type="GeneTree" id="ENSGT00940000153497"/>
<dbReference type="InParanoid" id="Q5R4K9"/>
<dbReference type="OMA" id="FTIKWID"/>
<dbReference type="OrthoDB" id="63267at2759"/>
<dbReference type="Proteomes" id="UP000001595">
    <property type="component" value="Chromosome 3"/>
</dbReference>
<dbReference type="GO" id="GO:0016324">
    <property type="term" value="C:apical plasma membrane"/>
    <property type="evidence" value="ECO:0007669"/>
    <property type="project" value="Ensembl"/>
</dbReference>
<dbReference type="GO" id="GO:0005903">
    <property type="term" value="C:brush border"/>
    <property type="evidence" value="ECO:0007669"/>
    <property type="project" value="Ensembl"/>
</dbReference>
<dbReference type="GO" id="GO:0005929">
    <property type="term" value="C:cilium"/>
    <property type="evidence" value="ECO:0007669"/>
    <property type="project" value="Ensembl"/>
</dbReference>
<dbReference type="GO" id="GO:0005829">
    <property type="term" value="C:cytosol"/>
    <property type="evidence" value="ECO:0000250"/>
    <property type="project" value="UniProtKB"/>
</dbReference>
<dbReference type="GO" id="GO:0005768">
    <property type="term" value="C:endosome"/>
    <property type="evidence" value="ECO:0007669"/>
    <property type="project" value="UniProtKB-SubCell"/>
</dbReference>
<dbReference type="GO" id="GO:0045171">
    <property type="term" value="C:intercellular bridge"/>
    <property type="evidence" value="ECO:0007669"/>
    <property type="project" value="Ensembl"/>
</dbReference>
<dbReference type="GO" id="GO:0015630">
    <property type="term" value="C:microtubule cytoskeleton"/>
    <property type="evidence" value="ECO:0007669"/>
    <property type="project" value="Ensembl"/>
</dbReference>
<dbReference type="GO" id="GO:0005634">
    <property type="term" value="C:nucleus"/>
    <property type="evidence" value="ECO:0000250"/>
    <property type="project" value="UniProtKB"/>
</dbReference>
<dbReference type="GO" id="GO:0120157">
    <property type="term" value="C:PAR polarity complex"/>
    <property type="evidence" value="ECO:0007669"/>
    <property type="project" value="Ensembl"/>
</dbReference>
<dbReference type="GO" id="GO:0043220">
    <property type="term" value="C:Schmidt-Lanterman incisure"/>
    <property type="evidence" value="ECO:0007669"/>
    <property type="project" value="Ensembl"/>
</dbReference>
<dbReference type="GO" id="GO:0005524">
    <property type="term" value="F:ATP binding"/>
    <property type="evidence" value="ECO:0007669"/>
    <property type="project" value="UniProtKB-KW"/>
</dbReference>
<dbReference type="GO" id="GO:0004699">
    <property type="term" value="F:diacylglycerol-dependent, calcium-independent serine/threonine kinase activity"/>
    <property type="evidence" value="ECO:0007669"/>
    <property type="project" value="Ensembl"/>
</dbReference>
<dbReference type="GO" id="GO:0005543">
    <property type="term" value="F:phospholipid binding"/>
    <property type="evidence" value="ECO:0007669"/>
    <property type="project" value="Ensembl"/>
</dbReference>
<dbReference type="GO" id="GO:0004672">
    <property type="term" value="F:protein kinase activity"/>
    <property type="evidence" value="ECO:0000250"/>
    <property type="project" value="UniProtKB"/>
</dbReference>
<dbReference type="GO" id="GO:0106310">
    <property type="term" value="F:protein serine kinase activity"/>
    <property type="evidence" value="ECO:0007669"/>
    <property type="project" value="RHEA"/>
</dbReference>
<dbReference type="GO" id="GO:0008270">
    <property type="term" value="F:zinc ion binding"/>
    <property type="evidence" value="ECO:0007669"/>
    <property type="project" value="UniProtKB-KW"/>
</dbReference>
<dbReference type="GO" id="GO:0007015">
    <property type="term" value="P:actin filament organization"/>
    <property type="evidence" value="ECO:0007669"/>
    <property type="project" value="Ensembl"/>
</dbReference>
<dbReference type="GO" id="GO:0045216">
    <property type="term" value="P:cell-cell junction organization"/>
    <property type="evidence" value="ECO:0007669"/>
    <property type="project" value="Ensembl"/>
</dbReference>
<dbReference type="GO" id="GO:0032869">
    <property type="term" value="P:cellular response to insulin stimulus"/>
    <property type="evidence" value="ECO:0007669"/>
    <property type="project" value="Ensembl"/>
</dbReference>
<dbReference type="GO" id="GO:0035089">
    <property type="term" value="P:establishment of apical/basal cell polarity"/>
    <property type="evidence" value="ECO:0007669"/>
    <property type="project" value="Ensembl"/>
</dbReference>
<dbReference type="GO" id="GO:0045197">
    <property type="term" value="P:establishment or maintenance of epithelial cell apical/basal polarity"/>
    <property type="evidence" value="ECO:0007669"/>
    <property type="project" value="Ensembl"/>
</dbReference>
<dbReference type="GO" id="GO:0042462">
    <property type="term" value="P:eye photoreceptor cell development"/>
    <property type="evidence" value="ECO:0007669"/>
    <property type="project" value="Ensembl"/>
</dbReference>
<dbReference type="GO" id="GO:0034351">
    <property type="term" value="P:negative regulation of glial cell apoptotic process"/>
    <property type="evidence" value="ECO:0000250"/>
    <property type="project" value="UniProtKB"/>
</dbReference>
<dbReference type="GO" id="GO:0043524">
    <property type="term" value="P:negative regulation of neuron apoptotic process"/>
    <property type="evidence" value="ECO:0000250"/>
    <property type="project" value="UniProtKB"/>
</dbReference>
<dbReference type="GO" id="GO:0046326">
    <property type="term" value="P:positive regulation of D-glucose import"/>
    <property type="evidence" value="ECO:0007669"/>
    <property type="project" value="Ensembl"/>
</dbReference>
<dbReference type="GO" id="GO:2000353">
    <property type="term" value="P:positive regulation of endothelial cell apoptotic process"/>
    <property type="evidence" value="ECO:0000250"/>
    <property type="project" value="UniProtKB"/>
</dbReference>
<dbReference type="GO" id="GO:0060252">
    <property type="term" value="P:positive regulation of glial cell proliferation"/>
    <property type="evidence" value="ECO:0000250"/>
    <property type="project" value="UniProtKB"/>
</dbReference>
<dbReference type="GO" id="GO:0010976">
    <property type="term" value="P:positive regulation of neuron projection development"/>
    <property type="evidence" value="ECO:0000250"/>
    <property type="project" value="UniProtKB"/>
</dbReference>
<dbReference type="GO" id="GO:0051092">
    <property type="term" value="P:positive regulation of NF-kappaB transcription factor activity"/>
    <property type="evidence" value="ECO:0000250"/>
    <property type="project" value="UniProtKB"/>
</dbReference>
<dbReference type="GO" id="GO:1903078">
    <property type="term" value="P:positive regulation of protein localization to plasma membrane"/>
    <property type="evidence" value="ECO:0007669"/>
    <property type="project" value="Ensembl"/>
</dbReference>
<dbReference type="CDD" id="cd20794">
    <property type="entry name" value="C1_aPKC"/>
    <property type="match status" value="1"/>
</dbReference>
<dbReference type="CDD" id="cd06404">
    <property type="entry name" value="PB1_aPKC"/>
    <property type="match status" value="1"/>
</dbReference>
<dbReference type="CDD" id="cd05618">
    <property type="entry name" value="STKc_aPKC_iota"/>
    <property type="match status" value="1"/>
</dbReference>
<dbReference type="FunFam" id="1.10.510.10:FF:000048">
    <property type="entry name" value="Protein kinase C"/>
    <property type="match status" value="1"/>
</dbReference>
<dbReference type="FunFam" id="3.10.20.90:FF:000071">
    <property type="entry name" value="Protein kinase C"/>
    <property type="match status" value="1"/>
</dbReference>
<dbReference type="FunFam" id="3.30.200.20:FF:000070">
    <property type="entry name" value="Protein kinase C"/>
    <property type="match status" value="1"/>
</dbReference>
<dbReference type="FunFam" id="3.30.60.20:FF:000012">
    <property type="entry name" value="Protein kinase C"/>
    <property type="match status" value="1"/>
</dbReference>
<dbReference type="Gene3D" id="3.30.60.20">
    <property type="match status" value="1"/>
</dbReference>
<dbReference type="Gene3D" id="3.10.20.90">
    <property type="entry name" value="Phosphatidylinositol 3-kinase Catalytic Subunit, Chain A, domain 1"/>
    <property type="match status" value="1"/>
</dbReference>
<dbReference type="Gene3D" id="3.30.200.20">
    <property type="entry name" value="Phosphorylase Kinase, domain 1"/>
    <property type="match status" value="1"/>
</dbReference>
<dbReference type="Gene3D" id="1.10.510.10">
    <property type="entry name" value="Transferase(Phosphotransferase) domain 1"/>
    <property type="match status" value="1"/>
</dbReference>
<dbReference type="InterPro" id="IPR000961">
    <property type="entry name" value="AGC-kinase_C"/>
</dbReference>
<dbReference type="InterPro" id="IPR034661">
    <property type="entry name" value="aPKC_iota"/>
</dbReference>
<dbReference type="InterPro" id="IPR046349">
    <property type="entry name" value="C1-like_sf"/>
</dbReference>
<dbReference type="InterPro" id="IPR020454">
    <property type="entry name" value="DAG/PE-bd"/>
</dbReference>
<dbReference type="InterPro" id="IPR011009">
    <property type="entry name" value="Kinase-like_dom_sf"/>
</dbReference>
<dbReference type="InterPro" id="IPR053793">
    <property type="entry name" value="PB1-like"/>
</dbReference>
<dbReference type="InterPro" id="IPR034877">
    <property type="entry name" value="PB1_aPKC"/>
</dbReference>
<dbReference type="InterPro" id="IPR000270">
    <property type="entry name" value="PB1_dom"/>
</dbReference>
<dbReference type="InterPro" id="IPR002219">
    <property type="entry name" value="PE/DAG-bd"/>
</dbReference>
<dbReference type="InterPro" id="IPR012233">
    <property type="entry name" value="PKC"/>
</dbReference>
<dbReference type="InterPro" id="IPR017892">
    <property type="entry name" value="Pkinase_C"/>
</dbReference>
<dbReference type="InterPro" id="IPR000719">
    <property type="entry name" value="Prot_kinase_dom"/>
</dbReference>
<dbReference type="InterPro" id="IPR017441">
    <property type="entry name" value="Protein_kinase_ATP_BS"/>
</dbReference>
<dbReference type="InterPro" id="IPR008271">
    <property type="entry name" value="Ser/Thr_kinase_AS"/>
</dbReference>
<dbReference type="PANTHER" id="PTHR24351">
    <property type="entry name" value="RIBOSOMAL PROTEIN S6 KINASE"/>
    <property type="match status" value="1"/>
</dbReference>
<dbReference type="Pfam" id="PF00130">
    <property type="entry name" value="C1_1"/>
    <property type="match status" value="1"/>
</dbReference>
<dbReference type="Pfam" id="PF00564">
    <property type="entry name" value="PB1"/>
    <property type="match status" value="1"/>
</dbReference>
<dbReference type="Pfam" id="PF00069">
    <property type="entry name" value="Pkinase"/>
    <property type="match status" value="1"/>
</dbReference>
<dbReference type="Pfam" id="PF00433">
    <property type="entry name" value="Pkinase_C"/>
    <property type="match status" value="1"/>
</dbReference>
<dbReference type="PIRSF" id="PIRSF000554">
    <property type="entry name" value="PKC_zeta"/>
    <property type="match status" value="1"/>
</dbReference>
<dbReference type="PRINTS" id="PR00008">
    <property type="entry name" value="DAGPEDOMAIN"/>
</dbReference>
<dbReference type="SMART" id="SM00109">
    <property type="entry name" value="C1"/>
    <property type="match status" value="1"/>
</dbReference>
<dbReference type="SMART" id="SM00666">
    <property type="entry name" value="PB1"/>
    <property type="match status" value="1"/>
</dbReference>
<dbReference type="SMART" id="SM00133">
    <property type="entry name" value="S_TK_X"/>
    <property type="match status" value="1"/>
</dbReference>
<dbReference type="SMART" id="SM00220">
    <property type="entry name" value="S_TKc"/>
    <property type="match status" value="1"/>
</dbReference>
<dbReference type="SUPFAM" id="SSF54277">
    <property type="entry name" value="CAD &amp; PB1 domains"/>
    <property type="match status" value="1"/>
</dbReference>
<dbReference type="SUPFAM" id="SSF57889">
    <property type="entry name" value="Cysteine-rich domain"/>
    <property type="match status" value="1"/>
</dbReference>
<dbReference type="SUPFAM" id="SSF56112">
    <property type="entry name" value="Protein kinase-like (PK-like)"/>
    <property type="match status" value="1"/>
</dbReference>
<dbReference type="PROSITE" id="PS51285">
    <property type="entry name" value="AGC_KINASE_CTER"/>
    <property type="match status" value="1"/>
</dbReference>
<dbReference type="PROSITE" id="PS51745">
    <property type="entry name" value="PB1"/>
    <property type="match status" value="1"/>
</dbReference>
<dbReference type="PROSITE" id="PS00107">
    <property type="entry name" value="PROTEIN_KINASE_ATP"/>
    <property type="match status" value="1"/>
</dbReference>
<dbReference type="PROSITE" id="PS50011">
    <property type="entry name" value="PROTEIN_KINASE_DOM"/>
    <property type="match status" value="1"/>
</dbReference>
<dbReference type="PROSITE" id="PS00108">
    <property type="entry name" value="PROTEIN_KINASE_ST"/>
    <property type="match status" value="1"/>
</dbReference>
<dbReference type="PROSITE" id="PS00479">
    <property type="entry name" value="ZF_DAG_PE_1"/>
    <property type="match status" value="1"/>
</dbReference>
<dbReference type="PROSITE" id="PS50081">
    <property type="entry name" value="ZF_DAG_PE_2"/>
    <property type="match status" value="1"/>
</dbReference>
<sequence>MPTQRDSSTMSHTVAGGGSGDHSHQVRVKAYYRGDIMITHFEPSISFEGLCNEVRDMCSFDNEQLFTMKWIDEEGDPCTVSSQLELEEAFRLYELNKDSELLIHVFPCVPERPGMPCPGEDKSIYRRGARRWRKLYCANGHTFQAKRFNRRAHCAICTDRIWGLGRQGYKCINCKLLVHKKCHKLVTIECGRHSLPPEPMMPMDQSSMHSDHAQTVIPYNPSSHESLDQVGEEKEAMNTRESGKASSSLGLQDFDLLRVIGRGSYAKVLLVRLKKTDRIYAMKVVKKELVNDDEDIDWVQTEKHVFEQASNHPFLVGLHSCFQTESRLFFVIEYVNGGDLMFHMQRQRKLPEEHARFYSAEISLALNYLHERGIIYRDLKLDNVLLDSEGHIKLTDYGMCKEGLRPGDTTSTFCGTPNYIAPEILRGEDYGFSVDWWALGVLMFEMMAGRSPFDIVGSSDNPDQNTEDYLFQVILEKQIRIPRSLSVKAASVLKSFLNKDPKERLGCHPQTGFADIQGHPFFRNVDWDMMEQKQVVPPFKPNISGEFGLDNFDSQFTNEPVQLTPDDDDIVRKIDQSEFEGFEYINPLLMSAEECV</sequence>